<comment type="function">
    <text evidence="1">Catalyzes the specific phosphorylation of the 3-hydroxyl group of shikimic acid using ATP as a cosubstrate.</text>
</comment>
<comment type="catalytic activity">
    <reaction evidence="1">
        <text>shikimate + ATP = 3-phosphoshikimate + ADP + H(+)</text>
        <dbReference type="Rhea" id="RHEA:13121"/>
        <dbReference type="ChEBI" id="CHEBI:15378"/>
        <dbReference type="ChEBI" id="CHEBI:30616"/>
        <dbReference type="ChEBI" id="CHEBI:36208"/>
        <dbReference type="ChEBI" id="CHEBI:145989"/>
        <dbReference type="ChEBI" id="CHEBI:456216"/>
        <dbReference type="EC" id="2.7.1.71"/>
    </reaction>
</comment>
<comment type="cofactor">
    <cofactor evidence="1">
        <name>Mg(2+)</name>
        <dbReference type="ChEBI" id="CHEBI:18420"/>
    </cofactor>
    <text evidence="1">Binds 1 Mg(2+) ion per subunit.</text>
</comment>
<comment type="pathway">
    <text evidence="1">Metabolic intermediate biosynthesis; chorismate biosynthesis; chorismate from D-erythrose 4-phosphate and phosphoenolpyruvate: step 5/7.</text>
</comment>
<comment type="subunit">
    <text evidence="1">Monomer.</text>
</comment>
<comment type="subcellular location">
    <subcellularLocation>
        <location evidence="1">Cytoplasm</location>
    </subcellularLocation>
</comment>
<comment type="similarity">
    <text evidence="1">Belongs to the shikimate kinase family.</text>
</comment>
<name>AROK_CHLPN</name>
<keyword id="KW-0028">Amino-acid biosynthesis</keyword>
<keyword id="KW-0057">Aromatic amino acid biosynthesis</keyword>
<keyword id="KW-0067">ATP-binding</keyword>
<keyword id="KW-0963">Cytoplasm</keyword>
<keyword id="KW-0418">Kinase</keyword>
<keyword id="KW-0460">Magnesium</keyword>
<keyword id="KW-0479">Metal-binding</keyword>
<keyword id="KW-0547">Nucleotide-binding</keyword>
<keyword id="KW-0808">Transferase</keyword>
<gene>
    <name evidence="1" type="primary">aroK</name>
    <name type="ordered locus">CPn_1038</name>
    <name type="ordered locus">CP_0814</name>
    <name type="ordered locus">CpB1078</name>
</gene>
<protein>
    <recommendedName>
        <fullName evidence="1">Shikimate kinase</fullName>
        <shortName evidence="1">SK</shortName>
        <ecNumber evidence="1">2.7.1.71</ecNumber>
    </recommendedName>
</protein>
<dbReference type="EC" id="2.7.1.71" evidence="1"/>
<dbReference type="EMBL" id="AE001363">
    <property type="protein sequence ID" value="AAD19175.1"/>
    <property type="molecule type" value="Genomic_DNA"/>
</dbReference>
<dbReference type="EMBL" id="AE002161">
    <property type="protein sequence ID" value="AAF38610.1"/>
    <property type="molecule type" value="Genomic_DNA"/>
</dbReference>
<dbReference type="EMBL" id="BA000008">
    <property type="protein sequence ID" value="BAA99245.1"/>
    <property type="molecule type" value="Genomic_DNA"/>
</dbReference>
<dbReference type="EMBL" id="AE009440">
    <property type="protein sequence ID" value="AAP99007.1"/>
    <property type="molecule type" value="Genomic_DNA"/>
</dbReference>
<dbReference type="PIR" id="B72004">
    <property type="entry name" value="B72004"/>
</dbReference>
<dbReference type="PIR" id="C86620">
    <property type="entry name" value="C86620"/>
</dbReference>
<dbReference type="RefSeq" id="NP_225232.1">
    <property type="nucleotide sequence ID" value="NC_000922.1"/>
</dbReference>
<dbReference type="RefSeq" id="WP_010883671.1">
    <property type="nucleotide sequence ID" value="NZ_LN847257.1"/>
</dbReference>
<dbReference type="SMR" id="Q9Z6M1"/>
<dbReference type="STRING" id="406984.CPK_ORF00465"/>
<dbReference type="GeneID" id="45051096"/>
<dbReference type="KEGG" id="cpa:CP_0814"/>
<dbReference type="KEGG" id="cpj:aroL"/>
<dbReference type="KEGG" id="cpn:CPn_1038"/>
<dbReference type="KEGG" id="cpt:CpB1078"/>
<dbReference type="PATRIC" id="fig|115713.3.peg.1136"/>
<dbReference type="eggNOG" id="COG0703">
    <property type="taxonomic scope" value="Bacteria"/>
</dbReference>
<dbReference type="HOGENOM" id="CLU_057607_5_0_0"/>
<dbReference type="OMA" id="IIKHRGT"/>
<dbReference type="OrthoDB" id="9800332at2"/>
<dbReference type="UniPathway" id="UPA00053">
    <property type="reaction ID" value="UER00088"/>
</dbReference>
<dbReference type="Proteomes" id="UP000000583">
    <property type="component" value="Chromosome"/>
</dbReference>
<dbReference type="Proteomes" id="UP000000801">
    <property type="component" value="Chromosome"/>
</dbReference>
<dbReference type="GO" id="GO:0005829">
    <property type="term" value="C:cytosol"/>
    <property type="evidence" value="ECO:0007669"/>
    <property type="project" value="TreeGrafter"/>
</dbReference>
<dbReference type="GO" id="GO:0005524">
    <property type="term" value="F:ATP binding"/>
    <property type="evidence" value="ECO:0007669"/>
    <property type="project" value="UniProtKB-UniRule"/>
</dbReference>
<dbReference type="GO" id="GO:0000287">
    <property type="term" value="F:magnesium ion binding"/>
    <property type="evidence" value="ECO:0007669"/>
    <property type="project" value="UniProtKB-UniRule"/>
</dbReference>
<dbReference type="GO" id="GO:0004765">
    <property type="term" value="F:shikimate kinase activity"/>
    <property type="evidence" value="ECO:0007669"/>
    <property type="project" value="UniProtKB-UniRule"/>
</dbReference>
<dbReference type="GO" id="GO:0008652">
    <property type="term" value="P:amino acid biosynthetic process"/>
    <property type="evidence" value="ECO:0007669"/>
    <property type="project" value="UniProtKB-KW"/>
</dbReference>
<dbReference type="GO" id="GO:0009073">
    <property type="term" value="P:aromatic amino acid family biosynthetic process"/>
    <property type="evidence" value="ECO:0007669"/>
    <property type="project" value="UniProtKB-KW"/>
</dbReference>
<dbReference type="GO" id="GO:0009423">
    <property type="term" value="P:chorismate biosynthetic process"/>
    <property type="evidence" value="ECO:0007669"/>
    <property type="project" value="UniProtKB-UniRule"/>
</dbReference>
<dbReference type="CDD" id="cd00464">
    <property type="entry name" value="SK"/>
    <property type="match status" value="1"/>
</dbReference>
<dbReference type="Gene3D" id="3.40.50.300">
    <property type="entry name" value="P-loop containing nucleotide triphosphate hydrolases"/>
    <property type="match status" value="1"/>
</dbReference>
<dbReference type="HAMAP" id="MF_00109">
    <property type="entry name" value="Shikimate_kinase"/>
    <property type="match status" value="1"/>
</dbReference>
<dbReference type="InterPro" id="IPR027417">
    <property type="entry name" value="P-loop_NTPase"/>
</dbReference>
<dbReference type="InterPro" id="IPR031322">
    <property type="entry name" value="Shikimate/glucono_kinase"/>
</dbReference>
<dbReference type="InterPro" id="IPR000623">
    <property type="entry name" value="Shikimate_kinase/TSH1"/>
</dbReference>
<dbReference type="NCBIfam" id="NF001866">
    <property type="entry name" value="PRK00625.1"/>
    <property type="match status" value="1"/>
</dbReference>
<dbReference type="PANTHER" id="PTHR21087">
    <property type="entry name" value="SHIKIMATE KINASE"/>
    <property type="match status" value="1"/>
</dbReference>
<dbReference type="PANTHER" id="PTHR21087:SF16">
    <property type="entry name" value="SHIKIMATE KINASE 1, CHLOROPLASTIC"/>
    <property type="match status" value="1"/>
</dbReference>
<dbReference type="Pfam" id="PF01202">
    <property type="entry name" value="SKI"/>
    <property type="match status" value="1"/>
</dbReference>
<dbReference type="PRINTS" id="PR01100">
    <property type="entry name" value="SHIKIMTKNASE"/>
</dbReference>
<dbReference type="SUPFAM" id="SSF52540">
    <property type="entry name" value="P-loop containing nucleoside triphosphate hydrolases"/>
    <property type="match status" value="1"/>
</dbReference>
<evidence type="ECO:0000255" key="1">
    <source>
        <dbReference type="HAMAP-Rule" id="MF_00109"/>
    </source>
</evidence>
<evidence type="ECO:0000305" key="2"/>
<proteinExistence type="inferred from homology"/>
<sequence length="176" mass="19631">MTIILCGLPTSGKSSLGKALAKFLNLPFYDLDDLIVSNYSSALYSSSAEIYKAYGDQKFSECEARILETLPPEDALISLGGGTLMYEASYRAIQTRGALVFLSVELPLIYERLEKRGLPERLKEAMKTKPLSEILTERIDRMKEIADYIFPVDHVDHSSKSSLEQASQDLITLLKS</sequence>
<accession>Q9Z6M1</accession>
<accession>Q9JQK7</accession>
<accession>Q9JS74</accession>
<reference key="1">
    <citation type="journal article" date="1999" name="Nat. Genet.">
        <title>Comparative genomes of Chlamydia pneumoniae and C. trachomatis.</title>
        <authorList>
            <person name="Kalman S."/>
            <person name="Mitchell W.P."/>
            <person name="Marathe R."/>
            <person name="Lammel C.J."/>
            <person name="Fan J."/>
            <person name="Hyman R.W."/>
            <person name="Olinger L."/>
            <person name="Grimwood J."/>
            <person name="Davis R.W."/>
            <person name="Stephens R.S."/>
        </authorList>
    </citation>
    <scope>NUCLEOTIDE SEQUENCE [LARGE SCALE GENOMIC DNA]</scope>
    <source>
        <strain>CWL029</strain>
    </source>
</reference>
<reference key="2">
    <citation type="journal article" date="2000" name="Nucleic Acids Res.">
        <title>Genome sequences of Chlamydia trachomatis MoPn and Chlamydia pneumoniae AR39.</title>
        <authorList>
            <person name="Read T.D."/>
            <person name="Brunham R.C."/>
            <person name="Shen C."/>
            <person name="Gill S.R."/>
            <person name="Heidelberg J.F."/>
            <person name="White O."/>
            <person name="Hickey E.K."/>
            <person name="Peterson J.D."/>
            <person name="Utterback T.R."/>
            <person name="Berry K.J."/>
            <person name="Bass S."/>
            <person name="Linher K.D."/>
            <person name="Weidman J.F."/>
            <person name="Khouri H.M."/>
            <person name="Craven B."/>
            <person name="Bowman C."/>
            <person name="Dodson R.J."/>
            <person name="Gwinn M.L."/>
            <person name="Nelson W.C."/>
            <person name="DeBoy R.T."/>
            <person name="Kolonay J.F."/>
            <person name="McClarty G."/>
            <person name="Salzberg S.L."/>
            <person name="Eisen J.A."/>
            <person name="Fraser C.M."/>
        </authorList>
    </citation>
    <scope>NUCLEOTIDE SEQUENCE [LARGE SCALE GENOMIC DNA]</scope>
    <source>
        <strain>AR39</strain>
    </source>
</reference>
<reference key="3">
    <citation type="journal article" date="2000" name="Nucleic Acids Res.">
        <title>Comparison of whole genome sequences of Chlamydia pneumoniae J138 from Japan and CWL029 from USA.</title>
        <authorList>
            <person name="Shirai M."/>
            <person name="Hirakawa H."/>
            <person name="Kimoto M."/>
            <person name="Tabuchi M."/>
            <person name="Kishi F."/>
            <person name="Ouchi K."/>
            <person name="Shiba T."/>
            <person name="Ishii K."/>
            <person name="Hattori M."/>
            <person name="Kuhara S."/>
            <person name="Nakazawa T."/>
        </authorList>
    </citation>
    <scope>NUCLEOTIDE SEQUENCE [LARGE SCALE GENOMIC DNA]</scope>
    <source>
        <strain>J138</strain>
    </source>
</reference>
<reference key="4">
    <citation type="submission" date="2002-05" db="EMBL/GenBank/DDBJ databases">
        <title>The genome sequence of Chlamydia pneumoniae TW183 and comparison with other Chlamydia strains based on whole genome sequence analysis.</title>
        <authorList>
            <person name="Geng M.M."/>
            <person name="Schuhmacher A."/>
            <person name="Muehldorfer I."/>
            <person name="Bensch K.W."/>
            <person name="Schaefer K.P."/>
            <person name="Schneider S."/>
            <person name="Pohl T."/>
            <person name="Essig A."/>
            <person name="Marre R."/>
            <person name="Melchers K."/>
        </authorList>
    </citation>
    <scope>NUCLEOTIDE SEQUENCE [LARGE SCALE GENOMIC DNA]</scope>
    <source>
        <strain>TW-183</strain>
    </source>
</reference>
<organism>
    <name type="scientific">Chlamydia pneumoniae</name>
    <name type="common">Chlamydophila pneumoniae</name>
    <dbReference type="NCBI Taxonomy" id="83558"/>
    <lineage>
        <taxon>Bacteria</taxon>
        <taxon>Pseudomonadati</taxon>
        <taxon>Chlamydiota</taxon>
        <taxon>Chlamydiia</taxon>
        <taxon>Chlamydiales</taxon>
        <taxon>Chlamydiaceae</taxon>
        <taxon>Chlamydia/Chlamydophila group</taxon>
        <taxon>Chlamydia</taxon>
    </lineage>
</organism>
<feature type="chain" id="PRO_0000192373" description="Shikimate kinase">
    <location>
        <begin position="1"/>
        <end position="176"/>
    </location>
</feature>
<feature type="binding site" evidence="1">
    <location>
        <begin position="10"/>
        <end position="15"/>
    </location>
    <ligand>
        <name>ATP</name>
        <dbReference type="ChEBI" id="CHEBI:30616"/>
    </ligand>
</feature>
<feature type="binding site" evidence="1">
    <location>
        <position position="14"/>
    </location>
    <ligand>
        <name>Mg(2+)</name>
        <dbReference type="ChEBI" id="CHEBI:18420"/>
    </ligand>
</feature>
<feature type="binding site" evidence="1">
    <location>
        <position position="32"/>
    </location>
    <ligand>
        <name>substrate</name>
    </ligand>
</feature>
<feature type="binding site" evidence="1">
    <location>
        <position position="81"/>
    </location>
    <ligand>
        <name>substrate</name>
    </ligand>
</feature>
<feature type="binding site" evidence="1">
    <location>
        <position position="138"/>
    </location>
    <ligand>
        <name>substrate</name>
    </ligand>
</feature>
<feature type="sequence conflict" description="In Ref. 3; BAA99245." evidence="2" ref="3">
    <original>E</original>
    <variation>D</variation>
    <location>
        <position position="164"/>
    </location>
</feature>